<organism>
    <name type="scientific">Arabidopsis thaliana</name>
    <name type="common">Mouse-ear cress</name>
    <dbReference type="NCBI Taxonomy" id="3702"/>
    <lineage>
        <taxon>Eukaryota</taxon>
        <taxon>Viridiplantae</taxon>
        <taxon>Streptophyta</taxon>
        <taxon>Embryophyta</taxon>
        <taxon>Tracheophyta</taxon>
        <taxon>Spermatophyta</taxon>
        <taxon>Magnoliopsida</taxon>
        <taxon>eudicotyledons</taxon>
        <taxon>Gunneridae</taxon>
        <taxon>Pentapetalae</taxon>
        <taxon>rosids</taxon>
        <taxon>malvids</taxon>
        <taxon>Brassicales</taxon>
        <taxon>Brassicaceae</taxon>
        <taxon>Camelineae</taxon>
        <taxon>Arabidopsis</taxon>
    </lineage>
</organism>
<feature type="chain" id="PRO_0000330297" description="Peroxisomal membrane protein 11C">
    <location>
        <begin position="1"/>
        <end position="235"/>
    </location>
</feature>
<feature type="topological domain" description="Cytoplasmic" evidence="2">
    <location>
        <begin position="1"/>
        <end position="91"/>
    </location>
</feature>
<feature type="transmembrane region" description="Helical" evidence="1">
    <location>
        <begin position="92"/>
        <end position="108"/>
    </location>
</feature>
<feature type="topological domain" description="Lumenal" evidence="2">
    <location>
        <begin position="109"/>
        <end position="206"/>
    </location>
</feature>
<feature type="transmembrane region" description="Helical" evidence="1">
    <location>
        <begin position="207"/>
        <end position="226"/>
    </location>
</feature>
<feature type="topological domain" description="Cytoplasmic" evidence="2">
    <location>
        <begin position="227"/>
        <end position="235"/>
    </location>
</feature>
<feature type="sequence conflict" description="In Ref. 2; CAD58675." evidence="6" ref="2">
    <original>R</original>
    <variation>L</variation>
    <location>
        <position position="124"/>
    </location>
</feature>
<accession>Q9LQ73</accession>
<accession>Q5QT12</accession>
<name>PX11C_ARATH</name>
<sequence>MSTLETTRAELGLVVVYLNKAEARDKICRAIQYGSKFLSDGQPGTAQNVDKNTSLARKVFRLFKFVNDLHALISPVPKGTPLPLVLLGKSKNALLSTFLFLDQIVWLGRTGIYKDKERAEILGRISLFCWMGSSVCTSLVEVGELGRLSASIKKLEKEIGNKDKHQNEQYRAKVEKSNERSLALIKAGMDVVVAFGLLQLAPKKVTPRVTGAFGFASSLISCYQLLPSHPKSKMV</sequence>
<reference key="1">
    <citation type="submission" date="1999-01" db="EMBL/GenBank/DDBJ databases">
        <title>Pex 11 homologue.</title>
        <authorList>
            <person name="Yamaguchi K."/>
            <person name="Nishimura M."/>
        </authorList>
    </citation>
    <scope>NUCLEOTIDE SEQUENCE [MRNA]</scope>
    <source>
        <strain>cv. Columbia</strain>
    </source>
</reference>
<reference key="2">
    <citation type="submission" date="2002-12" db="EMBL/GenBank/DDBJ databases">
        <title>AtPEX11 and peroxisome proliferation in Arabidopsis thaliana.</title>
        <authorList>
            <person name="El Shami M."/>
            <person name="Baker A."/>
        </authorList>
    </citation>
    <scope>NUCLEOTIDE SEQUENCE [MRNA]</scope>
    <source>
        <tissue>Seedling</tissue>
    </source>
</reference>
<reference key="3">
    <citation type="journal article" date="2000" name="Nature">
        <title>Sequence and analysis of chromosome 1 of the plant Arabidopsis thaliana.</title>
        <authorList>
            <person name="Theologis A."/>
            <person name="Ecker J.R."/>
            <person name="Palm C.J."/>
            <person name="Federspiel N.A."/>
            <person name="Kaul S."/>
            <person name="White O."/>
            <person name="Alonso J."/>
            <person name="Altafi H."/>
            <person name="Araujo R."/>
            <person name="Bowman C.L."/>
            <person name="Brooks S.Y."/>
            <person name="Buehler E."/>
            <person name="Chan A."/>
            <person name="Chao Q."/>
            <person name="Chen H."/>
            <person name="Cheuk R.F."/>
            <person name="Chin C.W."/>
            <person name="Chung M.K."/>
            <person name="Conn L."/>
            <person name="Conway A.B."/>
            <person name="Conway A.R."/>
            <person name="Creasy T.H."/>
            <person name="Dewar K."/>
            <person name="Dunn P."/>
            <person name="Etgu P."/>
            <person name="Feldblyum T.V."/>
            <person name="Feng J.-D."/>
            <person name="Fong B."/>
            <person name="Fujii C.Y."/>
            <person name="Gill J.E."/>
            <person name="Goldsmith A.D."/>
            <person name="Haas B."/>
            <person name="Hansen N.F."/>
            <person name="Hughes B."/>
            <person name="Huizar L."/>
            <person name="Hunter J.L."/>
            <person name="Jenkins J."/>
            <person name="Johnson-Hopson C."/>
            <person name="Khan S."/>
            <person name="Khaykin E."/>
            <person name="Kim C.J."/>
            <person name="Koo H.L."/>
            <person name="Kremenetskaia I."/>
            <person name="Kurtz D.B."/>
            <person name="Kwan A."/>
            <person name="Lam B."/>
            <person name="Langin-Hooper S."/>
            <person name="Lee A."/>
            <person name="Lee J.M."/>
            <person name="Lenz C.A."/>
            <person name="Li J.H."/>
            <person name="Li Y.-P."/>
            <person name="Lin X."/>
            <person name="Liu S.X."/>
            <person name="Liu Z.A."/>
            <person name="Luros J.S."/>
            <person name="Maiti R."/>
            <person name="Marziali A."/>
            <person name="Militscher J."/>
            <person name="Miranda M."/>
            <person name="Nguyen M."/>
            <person name="Nierman W.C."/>
            <person name="Osborne B.I."/>
            <person name="Pai G."/>
            <person name="Peterson J."/>
            <person name="Pham P.K."/>
            <person name="Rizzo M."/>
            <person name="Rooney T."/>
            <person name="Rowley D."/>
            <person name="Sakano H."/>
            <person name="Salzberg S.L."/>
            <person name="Schwartz J.R."/>
            <person name="Shinn P."/>
            <person name="Southwick A.M."/>
            <person name="Sun H."/>
            <person name="Tallon L.J."/>
            <person name="Tambunga G."/>
            <person name="Toriumi M.J."/>
            <person name="Town C.D."/>
            <person name="Utterback T."/>
            <person name="Van Aken S."/>
            <person name="Vaysberg M."/>
            <person name="Vysotskaia V.S."/>
            <person name="Walker M."/>
            <person name="Wu D."/>
            <person name="Yu G."/>
            <person name="Fraser C.M."/>
            <person name="Venter J.C."/>
            <person name="Davis R.W."/>
        </authorList>
    </citation>
    <scope>NUCLEOTIDE SEQUENCE [LARGE SCALE GENOMIC DNA]</scope>
    <source>
        <strain>cv. Columbia</strain>
    </source>
</reference>
<reference key="4">
    <citation type="journal article" date="2017" name="Plant J.">
        <title>Araport11: a complete reannotation of the Arabidopsis thaliana reference genome.</title>
        <authorList>
            <person name="Cheng C.Y."/>
            <person name="Krishnakumar V."/>
            <person name="Chan A.P."/>
            <person name="Thibaud-Nissen F."/>
            <person name="Schobel S."/>
            <person name="Town C.D."/>
        </authorList>
    </citation>
    <scope>GENOME REANNOTATION</scope>
    <source>
        <strain>cv. Columbia</strain>
    </source>
</reference>
<reference key="5">
    <citation type="journal article" date="2003" name="Science">
        <title>Empirical analysis of transcriptional activity in the Arabidopsis genome.</title>
        <authorList>
            <person name="Yamada K."/>
            <person name="Lim J."/>
            <person name="Dale J.M."/>
            <person name="Chen H."/>
            <person name="Shinn P."/>
            <person name="Palm C.J."/>
            <person name="Southwick A.M."/>
            <person name="Wu H.C."/>
            <person name="Kim C.J."/>
            <person name="Nguyen M."/>
            <person name="Pham P.K."/>
            <person name="Cheuk R.F."/>
            <person name="Karlin-Newmann G."/>
            <person name="Liu S.X."/>
            <person name="Lam B."/>
            <person name="Sakano H."/>
            <person name="Wu T."/>
            <person name="Yu G."/>
            <person name="Miranda M."/>
            <person name="Quach H.L."/>
            <person name="Tripp M."/>
            <person name="Chang C.H."/>
            <person name="Lee J.M."/>
            <person name="Toriumi M.J."/>
            <person name="Chan M.M."/>
            <person name="Tang C.C."/>
            <person name="Onodera C.S."/>
            <person name="Deng J.M."/>
            <person name="Akiyama K."/>
            <person name="Ansari Y."/>
            <person name="Arakawa T."/>
            <person name="Banh J."/>
            <person name="Banno F."/>
            <person name="Bowser L."/>
            <person name="Brooks S.Y."/>
            <person name="Carninci P."/>
            <person name="Chao Q."/>
            <person name="Choy N."/>
            <person name="Enju A."/>
            <person name="Goldsmith A.D."/>
            <person name="Gurjal M."/>
            <person name="Hansen N.F."/>
            <person name="Hayashizaki Y."/>
            <person name="Johnson-Hopson C."/>
            <person name="Hsuan V.W."/>
            <person name="Iida K."/>
            <person name="Karnes M."/>
            <person name="Khan S."/>
            <person name="Koesema E."/>
            <person name="Ishida J."/>
            <person name="Jiang P.X."/>
            <person name="Jones T."/>
            <person name="Kawai J."/>
            <person name="Kamiya A."/>
            <person name="Meyers C."/>
            <person name="Nakajima M."/>
            <person name="Narusaka M."/>
            <person name="Seki M."/>
            <person name="Sakurai T."/>
            <person name="Satou M."/>
            <person name="Tamse R."/>
            <person name="Vaysberg M."/>
            <person name="Wallender E.K."/>
            <person name="Wong C."/>
            <person name="Yamamura Y."/>
            <person name="Yuan S."/>
            <person name="Shinozaki K."/>
            <person name="Davis R.W."/>
            <person name="Theologis A."/>
            <person name="Ecker J.R."/>
        </authorList>
    </citation>
    <scope>NUCLEOTIDE SEQUENCE [LARGE SCALE MRNA]</scope>
    <source>
        <strain>cv. Columbia</strain>
    </source>
</reference>
<reference key="6">
    <citation type="submission" date="2002-03" db="EMBL/GenBank/DDBJ databases">
        <title>Full-length cDNA from Arabidopsis thaliana.</title>
        <authorList>
            <person name="Brover V.V."/>
            <person name="Troukhan M.E."/>
            <person name="Alexandrov N.A."/>
            <person name="Lu Y.-P."/>
            <person name="Flavell R.B."/>
            <person name="Feldmann K.A."/>
        </authorList>
    </citation>
    <scope>NUCLEOTIDE SEQUENCE [LARGE SCALE MRNA]</scope>
</reference>
<reference key="7">
    <citation type="journal article" date="2006" name="J. Cell Sci.">
        <title>Five Arabidopsis peroxin 11 homologs individually promote peroxisome elongation, duplication or aggregation.</title>
        <authorList>
            <person name="Lingard M.J."/>
            <person name="Trelease R.N."/>
        </authorList>
    </citation>
    <scope>FUNCTION</scope>
    <scope>TOPOLOGY</scope>
    <scope>TISSUE SPECIFICITY</scope>
    <scope>NOMENCLATURE</scope>
</reference>
<reference key="8">
    <citation type="journal article" date="2007" name="Plant Cell">
        <title>The PEROXIN11 protein family controls peroxisome proliferation in Arabidopsis.</title>
        <authorList>
            <person name="Orth T."/>
            <person name="Reumann S."/>
            <person name="Zhang X."/>
            <person name="Fan J."/>
            <person name="Wenzel D."/>
            <person name="Quan S."/>
            <person name="Hu J."/>
        </authorList>
    </citation>
    <scope>FUNCTION</scope>
    <scope>SUBCELLULAR LOCATION</scope>
    <scope>TISSUE SPECIFICITY</scope>
    <scope>INDUCTION</scope>
    <scope>GENE FAMILY</scope>
</reference>
<reference key="9">
    <citation type="journal article" date="2008" name="Plant Cell">
        <title>Arabidopsis PEROXIN11c-e, FISSION1b, and DYNAMIN-RELATED PROTEIN3A cooperate in cell cycle-associated replication of peroxisomes.</title>
        <authorList>
            <person name="Lingard M.J."/>
            <person name="Gidda S.K."/>
            <person name="Bingham S."/>
            <person name="Rothstein S.J."/>
            <person name="Mullen R.T."/>
            <person name="Trelease R.N."/>
        </authorList>
    </citation>
    <scope>FUNCTION</scope>
    <scope>SUBUNIT</scope>
    <scope>INTERACTION WITH FIS1B</scope>
</reference>
<reference key="10">
    <citation type="journal article" date="2010" name="Plant Cell">
        <title>The Arabidopsis chloroplast division protein DYNAMIN-RELATED PROTEIN5B also mediates peroxisome division.</title>
        <authorList>
            <person name="Zhang X."/>
            <person name="Hu J."/>
        </authorList>
    </citation>
    <scope>INTERACTION WITH ARC5 AND FIS1B</scope>
    <scope>SUBCELLULAR LOCATION</scope>
    <scope>SELF-INTERACTION</scope>
</reference>
<evidence type="ECO:0000255" key="1"/>
<evidence type="ECO:0000269" key="2">
    <source>
    </source>
</evidence>
<evidence type="ECO:0000269" key="3">
    <source>
    </source>
</evidence>
<evidence type="ECO:0000269" key="4">
    <source>
    </source>
</evidence>
<evidence type="ECO:0000269" key="5">
    <source>
    </source>
</evidence>
<evidence type="ECO:0000305" key="6"/>
<proteinExistence type="evidence at protein level"/>
<gene>
    <name type="primary">PEX11C</name>
    <name type="synonym">PEX11-1</name>
    <name type="ordered locus">At1g01820</name>
    <name type="ORF">T1N6.24</name>
</gene>
<keyword id="KW-0472">Membrane</keyword>
<keyword id="KW-0576">Peroxisome</keyword>
<keyword id="KW-0962">Peroxisome biogenesis</keyword>
<keyword id="KW-1185">Reference proteome</keyword>
<keyword id="KW-0812">Transmembrane</keyword>
<keyword id="KW-1133">Transmembrane helix</keyword>
<dbReference type="EMBL" id="AB022861">
    <property type="protein sequence ID" value="BAD83578.1"/>
    <property type="molecule type" value="mRNA"/>
</dbReference>
<dbReference type="EMBL" id="AJ520104">
    <property type="protein sequence ID" value="CAD58675.1"/>
    <property type="molecule type" value="mRNA"/>
</dbReference>
<dbReference type="EMBL" id="AC009273">
    <property type="protein sequence ID" value="AAF78415.1"/>
    <property type="molecule type" value="Genomic_DNA"/>
</dbReference>
<dbReference type="EMBL" id="CP002684">
    <property type="protein sequence ID" value="AEE27339.1"/>
    <property type="molecule type" value="Genomic_DNA"/>
</dbReference>
<dbReference type="EMBL" id="AF332441">
    <property type="protein sequence ID" value="AAG48804.1"/>
    <property type="molecule type" value="mRNA"/>
</dbReference>
<dbReference type="EMBL" id="AY064139">
    <property type="protein sequence ID" value="AAL36046.1"/>
    <property type="molecule type" value="mRNA"/>
</dbReference>
<dbReference type="EMBL" id="AY097406">
    <property type="protein sequence ID" value="AAM19922.1"/>
    <property type="molecule type" value="mRNA"/>
</dbReference>
<dbReference type="EMBL" id="AY086844">
    <property type="protein sequence ID" value="AAM63892.1"/>
    <property type="molecule type" value="mRNA"/>
</dbReference>
<dbReference type="PIR" id="A86150">
    <property type="entry name" value="A86150"/>
</dbReference>
<dbReference type="RefSeq" id="NP_563636.1">
    <property type="nucleotide sequence ID" value="NM_100065.5"/>
</dbReference>
<dbReference type="BioGRID" id="24492">
    <property type="interactions" value="1"/>
</dbReference>
<dbReference type="FunCoup" id="Q9LQ73">
    <property type="interactions" value="676"/>
</dbReference>
<dbReference type="STRING" id="3702.Q9LQ73"/>
<dbReference type="iPTMnet" id="Q9LQ73"/>
<dbReference type="PaxDb" id="3702-AT1G01820.1"/>
<dbReference type="ProteomicsDB" id="226136"/>
<dbReference type="EnsemblPlants" id="AT1G01820.1">
    <property type="protein sequence ID" value="AT1G01820.1"/>
    <property type="gene ID" value="AT1G01820"/>
</dbReference>
<dbReference type="GeneID" id="839257"/>
<dbReference type="Gramene" id="AT1G01820.1">
    <property type="protein sequence ID" value="AT1G01820.1"/>
    <property type="gene ID" value="AT1G01820"/>
</dbReference>
<dbReference type="KEGG" id="ath:AT1G01820"/>
<dbReference type="Araport" id="AT1G01820"/>
<dbReference type="TAIR" id="AT1G01820">
    <property type="gene designation" value="PEX11C"/>
</dbReference>
<dbReference type="eggNOG" id="KOG4186">
    <property type="taxonomic scope" value="Eukaryota"/>
</dbReference>
<dbReference type="HOGENOM" id="CLU_075417_0_0_1"/>
<dbReference type="InParanoid" id="Q9LQ73"/>
<dbReference type="OMA" id="QDGEYCA"/>
<dbReference type="OrthoDB" id="411017at2759"/>
<dbReference type="PhylomeDB" id="Q9LQ73"/>
<dbReference type="PRO" id="PR:Q9LQ73"/>
<dbReference type="Proteomes" id="UP000006548">
    <property type="component" value="Chromosome 1"/>
</dbReference>
<dbReference type="ExpressionAtlas" id="Q9LQ73">
    <property type="expression patterns" value="baseline and differential"/>
</dbReference>
<dbReference type="GO" id="GO:0005576">
    <property type="term" value="C:extracellular region"/>
    <property type="evidence" value="ECO:0007005"/>
    <property type="project" value="TAIR"/>
</dbReference>
<dbReference type="GO" id="GO:0005778">
    <property type="term" value="C:peroxisomal membrane"/>
    <property type="evidence" value="ECO:0007669"/>
    <property type="project" value="UniProtKB-SubCell"/>
</dbReference>
<dbReference type="GO" id="GO:0005777">
    <property type="term" value="C:peroxisome"/>
    <property type="evidence" value="ECO:0000314"/>
    <property type="project" value="UniProtKB"/>
</dbReference>
<dbReference type="GO" id="GO:0009506">
    <property type="term" value="C:plasmodesma"/>
    <property type="evidence" value="ECO:0007005"/>
    <property type="project" value="TAIR"/>
</dbReference>
<dbReference type="GO" id="GO:0042802">
    <property type="term" value="F:identical protein binding"/>
    <property type="evidence" value="ECO:0000314"/>
    <property type="project" value="UniProtKB"/>
</dbReference>
<dbReference type="GO" id="GO:0016559">
    <property type="term" value="P:peroxisome fission"/>
    <property type="evidence" value="ECO:0000314"/>
    <property type="project" value="UniProtKB"/>
</dbReference>
<dbReference type="GO" id="GO:0007031">
    <property type="term" value="P:peroxisome organization"/>
    <property type="evidence" value="ECO:0000315"/>
    <property type="project" value="TAIR"/>
</dbReference>
<dbReference type="GO" id="GO:0044375">
    <property type="term" value="P:regulation of peroxisome size"/>
    <property type="evidence" value="ECO:0000314"/>
    <property type="project" value="UniProtKB"/>
</dbReference>
<dbReference type="InterPro" id="IPR008733">
    <property type="entry name" value="PEX11"/>
</dbReference>
<dbReference type="PANTHER" id="PTHR12652">
    <property type="entry name" value="PEROXISOMAL BIOGENESIS FACTOR 11"/>
    <property type="match status" value="1"/>
</dbReference>
<dbReference type="PANTHER" id="PTHR12652:SF10">
    <property type="entry name" value="PEROXISOMAL MEMBRANE PROTEIN 11C-RELATED"/>
    <property type="match status" value="1"/>
</dbReference>
<dbReference type="Pfam" id="PF05648">
    <property type="entry name" value="PEX11"/>
    <property type="match status" value="1"/>
</dbReference>
<comment type="function">
    <text evidence="2 3 4">Involved in peroxisomal proliferation. Promotes peroxisomal duplication, aggregation or elongation without fission.</text>
</comment>
<comment type="subunit">
    <text evidence="4 5">Homooligomer. Interacts with ARC5 and FIS1B on peroxisomes.</text>
</comment>
<comment type="subcellular location">
    <subcellularLocation>
        <location evidence="3 5">Peroxisome membrane</location>
        <topology evidence="3 5">Multi-pass membrane protein</topology>
    </subcellularLocation>
</comment>
<comment type="tissue specificity">
    <text evidence="2 3">Expressed in roots and developing siliques.</text>
</comment>
<comment type="induction">
    <text evidence="3">Up-regulated during senescence.</text>
</comment>
<comment type="miscellaneous">
    <text>Can complement the yeast pex11 null mutant.</text>
</comment>
<comment type="similarity">
    <text evidence="6">Belongs to the peroxin-11 family.</text>
</comment>
<protein>
    <recommendedName>
        <fullName>Peroxisomal membrane protein 11C</fullName>
    </recommendedName>
    <alternativeName>
        <fullName>Peroxin-11C</fullName>
        <shortName>AtPEX11c</shortName>
    </alternativeName>
</protein>